<evidence type="ECO:0000255" key="1">
    <source>
        <dbReference type="HAMAP-Rule" id="MF_00598"/>
    </source>
</evidence>
<gene>
    <name evidence="1" type="primary">smg</name>
    <name type="ordered locus">BUAP5A_488</name>
</gene>
<comment type="similarity">
    <text evidence="1">Belongs to the Smg family.</text>
</comment>
<reference key="1">
    <citation type="journal article" date="2009" name="Science">
        <title>The dynamics and time scale of ongoing genomic erosion in symbiotic bacteria.</title>
        <authorList>
            <person name="Moran N.A."/>
            <person name="McLaughlin H.J."/>
            <person name="Sorek R."/>
        </authorList>
    </citation>
    <scope>NUCLEOTIDE SEQUENCE [LARGE SCALE GENOMIC DNA]</scope>
    <source>
        <strain>5A</strain>
    </source>
</reference>
<proteinExistence type="inferred from homology"/>
<name>SMG_BUCA5</name>
<sequence length="157" mass="18663">MFDILIYLFENYIHNESRISIDYDSLTNDLSDIGFQRRDIYNALSWLKNLSCYKKNIIPSINPLSNKITIRIYTQEESLKLNVDCRGFILFLEQLEILTLDTREVIIERIMELDINELNLEDLKWIVLIVLFNVPGCESAYHKLENLLFNFKEDIIH</sequence>
<organism>
    <name type="scientific">Buchnera aphidicola subsp. Acyrthosiphon pisum (strain 5A)</name>
    <dbReference type="NCBI Taxonomy" id="563178"/>
    <lineage>
        <taxon>Bacteria</taxon>
        <taxon>Pseudomonadati</taxon>
        <taxon>Pseudomonadota</taxon>
        <taxon>Gammaproteobacteria</taxon>
        <taxon>Enterobacterales</taxon>
        <taxon>Erwiniaceae</taxon>
        <taxon>Buchnera</taxon>
    </lineage>
</organism>
<protein>
    <recommendedName>
        <fullName evidence="1">Protein Smg</fullName>
    </recommendedName>
</protein>
<accession>B8D9R8</accession>
<feature type="chain" id="PRO_1000146991" description="Protein Smg">
    <location>
        <begin position="1"/>
        <end position="157"/>
    </location>
</feature>
<dbReference type="EMBL" id="CP001161">
    <property type="protein sequence ID" value="ACL30839.1"/>
    <property type="molecule type" value="Genomic_DNA"/>
</dbReference>
<dbReference type="RefSeq" id="WP_009874446.1">
    <property type="nucleotide sequence ID" value="NC_011833.1"/>
</dbReference>
<dbReference type="SMR" id="B8D9R8"/>
<dbReference type="KEGG" id="bap:BUAP5A_488"/>
<dbReference type="HOGENOM" id="CLU_133242_0_0_6"/>
<dbReference type="OrthoDB" id="9788984at2"/>
<dbReference type="Proteomes" id="UP000006904">
    <property type="component" value="Chromosome"/>
</dbReference>
<dbReference type="HAMAP" id="MF_00598">
    <property type="entry name" value="Smg"/>
    <property type="match status" value="1"/>
</dbReference>
<dbReference type="InterPro" id="IPR007456">
    <property type="entry name" value="Smg"/>
</dbReference>
<dbReference type="NCBIfam" id="NF002897">
    <property type="entry name" value="PRK03430.1"/>
    <property type="match status" value="1"/>
</dbReference>
<dbReference type="PANTHER" id="PTHR38692">
    <property type="entry name" value="PROTEIN SMG"/>
    <property type="match status" value="1"/>
</dbReference>
<dbReference type="PANTHER" id="PTHR38692:SF1">
    <property type="entry name" value="PROTEIN SMG"/>
    <property type="match status" value="1"/>
</dbReference>
<dbReference type="Pfam" id="PF04361">
    <property type="entry name" value="DUF494"/>
    <property type="match status" value="1"/>
</dbReference>